<accession>A3QFY1</accession>
<feature type="chain" id="PRO_1000025084" description="UDP-2,3-diacylglucosamine hydrolase">
    <location>
        <begin position="1"/>
        <end position="242"/>
    </location>
</feature>
<feature type="binding site" evidence="1">
    <location>
        <position position="9"/>
    </location>
    <ligand>
        <name>Mn(2+)</name>
        <dbReference type="ChEBI" id="CHEBI:29035"/>
        <label>1</label>
    </ligand>
</feature>
<feature type="binding site" evidence="1">
    <location>
        <position position="11"/>
    </location>
    <ligand>
        <name>Mn(2+)</name>
        <dbReference type="ChEBI" id="CHEBI:29035"/>
        <label>1</label>
    </ligand>
</feature>
<feature type="binding site" evidence="1">
    <location>
        <position position="42"/>
    </location>
    <ligand>
        <name>Mn(2+)</name>
        <dbReference type="ChEBI" id="CHEBI:29035"/>
        <label>1</label>
    </ligand>
</feature>
<feature type="binding site" evidence="1">
    <location>
        <position position="42"/>
    </location>
    <ligand>
        <name>Mn(2+)</name>
        <dbReference type="ChEBI" id="CHEBI:29035"/>
        <label>2</label>
    </ligand>
</feature>
<feature type="binding site" evidence="1">
    <location>
        <begin position="79"/>
        <end position="80"/>
    </location>
    <ligand>
        <name>substrate</name>
    </ligand>
</feature>
<feature type="binding site" evidence="1">
    <location>
        <position position="79"/>
    </location>
    <ligand>
        <name>Mn(2+)</name>
        <dbReference type="ChEBI" id="CHEBI:29035"/>
        <label>2</label>
    </ligand>
</feature>
<feature type="binding site" evidence="1">
    <location>
        <position position="114"/>
    </location>
    <ligand>
        <name>Mn(2+)</name>
        <dbReference type="ChEBI" id="CHEBI:29035"/>
        <label>2</label>
    </ligand>
</feature>
<feature type="binding site" evidence="1">
    <location>
        <position position="122"/>
    </location>
    <ligand>
        <name>substrate</name>
    </ligand>
</feature>
<feature type="binding site" evidence="1">
    <location>
        <position position="160"/>
    </location>
    <ligand>
        <name>substrate</name>
    </ligand>
</feature>
<feature type="binding site" evidence="1">
    <location>
        <position position="164"/>
    </location>
    <ligand>
        <name>substrate</name>
    </ligand>
</feature>
<feature type="binding site" evidence="1">
    <location>
        <position position="167"/>
    </location>
    <ligand>
        <name>substrate</name>
    </ligand>
</feature>
<feature type="binding site" evidence="1">
    <location>
        <position position="195"/>
    </location>
    <ligand>
        <name>Mn(2+)</name>
        <dbReference type="ChEBI" id="CHEBI:29035"/>
        <label>2</label>
    </ligand>
</feature>
<feature type="binding site" evidence="1">
    <location>
        <position position="195"/>
    </location>
    <ligand>
        <name>substrate</name>
    </ligand>
</feature>
<feature type="binding site" evidence="1">
    <location>
        <position position="197"/>
    </location>
    <ligand>
        <name>Mn(2+)</name>
        <dbReference type="ChEBI" id="CHEBI:29035"/>
        <label>1</label>
    </ligand>
</feature>
<evidence type="ECO:0000255" key="1">
    <source>
        <dbReference type="HAMAP-Rule" id="MF_00575"/>
    </source>
</evidence>
<sequence>MNYTLFVGDLHLSADRPDILNAFHQFLDQDASHCDALYILGDLFEVWVGDDIAEPFALELAERLKRFSTHTPIYFIHGNRDFLLGKEYAKRSGMTLLPEIYSIDLYGEPSVLLHGDSLCTLDKAYQRFRRFRNMAWAKFIYNHLPKSKRIAIADKLRSKSKQSNQIKSYSIMDVEQSAVEQLMAETGAKRMIHGHTHRPDIHRLANDTQRIVVGDWYEQGSVLKISPKEVNLQSLPFGETEA</sequence>
<gene>
    <name evidence="1" type="primary">lpxH</name>
    <name type="ordered locus">Shew_2513</name>
</gene>
<comment type="function">
    <text evidence="1">Hydrolyzes the pyrophosphate bond of UDP-2,3-diacylglucosamine to yield 2,3-diacylglucosamine 1-phosphate (lipid X) and UMP by catalyzing the attack of water at the alpha-P atom. Involved in the biosynthesis of lipid A, a phosphorylated glycolipid that anchors the lipopolysaccharide to the outer membrane of the cell.</text>
</comment>
<comment type="catalytic activity">
    <reaction evidence="1">
        <text>UDP-2-N,3-O-bis[(3R)-3-hydroxytetradecanoyl]-alpha-D-glucosamine + H2O = 2-N,3-O-bis[(3R)-3-hydroxytetradecanoyl]-alpha-D-glucosaminyl 1-phosphate + UMP + 2 H(+)</text>
        <dbReference type="Rhea" id="RHEA:25213"/>
        <dbReference type="ChEBI" id="CHEBI:15377"/>
        <dbReference type="ChEBI" id="CHEBI:15378"/>
        <dbReference type="ChEBI" id="CHEBI:57865"/>
        <dbReference type="ChEBI" id="CHEBI:57957"/>
        <dbReference type="ChEBI" id="CHEBI:78847"/>
        <dbReference type="EC" id="3.6.1.54"/>
    </reaction>
</comment>
<comment type="cofactor">
    <cofactor evidence="1">
        <name>Mn(2+)</name>
        <dbReference type="ChEBI" id="CHEBI:29035"/>
    </cofactor>
    <text evidence="1">Binds 2 Mn(2+) ions per subunit in a binuclear metal center.</text>
</comment>
<comment type="pathway">
    <text evidence="1">Glycolipid biosynthesis; lipid IV(A) biosynthesis; lipid IV(A) from (3R)-3-hydroxytetradecanoyl-[acyl-carrier-protein] and UDP-N-acetyl-alpha-D-glucosamine: step 4/6.</text>
</comment>
<comment type="subcellular location">
    <subcellularLocation>
        <location evidence="1">Cell inner membrane</location>
        <topology evidence="1">Peripheral membrane protein</topology>
        <orientation evidence="1">Cytoplasmic side</orientation>
    </subcellularLocation>
</comment>
<comment type="similarity">
    <text evidence="1">Belongs to the LpxH family.</text>
</comment>
<organism>
    <name type="scientific">Shewanella loihica (strain ATCC BAA-1088 / PV-4)</name>
    <dbReference type="NCBI Taxonomy" id="323850"/>
    <lineage>
        <taxon>Bacteria</taxon>
        <taxon>Pseudomonadati</taxon>
        <taxon>Pseudomonadota</taxon>
        <taxon>Gammaproteobacteria</taxon>
        <taxon>Alteromonadales</taxon>
        <taxon>Shewanellaceae</taxon>
        <taxon>Shewanella</taxon>
    </lineage>
</organism>
<dbReference type="EC" id="3.6.1.54" evidence="1"/>
<dbReference type="EMBL" id="CP000606">
    <property type="protein sequence ID" value="ABO24379.1"/>
    <property type="molecule type" value="Genomic_DNA"/>
</dbReference>
<dbReference type="RefSeq" id="WP_011866310.1">
    <property type="nucleotide sequence ID" value="NC_009092.1"/>
</dbReference>
<dbReference type="SMR" id="A3QFY1"/>
<dbReference type="STRING" id="323850.Shew_2513"/>
<dbReference type="KEGG" id="slo:Shew_2513"/>
<dbReference type="eggNOG" id="COG2908">
    <property type="taxonomic scope" value="Bacteria"/>
</dbReference>
<dbReference type="HOGENOM" id="CLU_074586_0_0_6"/>
<dbReference type="OrthoDB" id="9783283at2"/>
<dbReference type="UniPathway" id="UPA00359">
    <property type="reaction ID" value="UER00480"/>
</dbReference>
<dbReference type="Proteomes" id="UP000001558">
    <property type="component" value="Chromosome"/>
</dbReference>
<dbReference type="GO" id="GO:0005737">
    <property type="term" value="C:cytoplasm"/>
    <property type="evidence" value="ECO:0007669"/>
    <property type="project" value="InterPro"/>
</dbReference>
<dbReference type="GO" id="GO:0019897">
    <property type="term" value="C:extrinsic component of plasma membrane"/>
    <property type="evidence" value="ECO:0007669"/>
    <property type="project" value="UniProtKB-UniRule"/>
</dbReference>
<dbReference type="GO" id="GO:0030145">
    <property type="term" value="F:manganese ion binding"/>
    <property type="evidence" value="ECO:0007669"/>
    <property type="project" value="UniProtKB-UniRule"/>
</dbReference>
<dbReference type="GO" id="GO:0008758">
    <property type="term" value="F:UDP-2,3-diacylglucosamine hydrolase activity"/>
    <property type="evidence" value="ECO:0007669"/>
    <property type="project" value="UniProtKB-UniRule"/>
</dbReference>
<dbReference type="GO" id="GO:0009245">
    <property type="term" value="P:lipid A biosynthetic process"/>
    <property type="evidence" value="ECO:0007669"/>
    <property type="project" value="UniProtKB-UniRule"/>
</dbReference>
<dbReference type="CDD" id="cd07398">
    <property type="entry name" value="MPP_YbbF-LpxH"/>
    <property type="match status" value="1"/>
</dbReference>
<dbReference type="Gene3D" id="3.60.21.10">
    <property type="match status" value="1"/>
</dbReference>
<dbReference type="HAMAP" id="MF_00575">
    <property type="entry name" value="LpxH"/>
    <property type="match status" value="1"/>
</dbReference>
<dbReference type="InterPro" id="IPR004843">
    <property type="entry name" value="Calcineurin-like_PHP_ApaH"/>
</dbReference>
<dbReference type="InterPro" id="IPR043461">
    <property type="entry name" value="LpxH-like"/>
</dbReference>
<dbReference type="InterPro" id="IPR029052">
    <property type="entry name" value="Metallo-depent_PP-like"/>
</dbReference>
<dbReference type="InterPro" id="IPR010138">
    <property type="entry name" value="UDP-diacylglucosamine_Hdrlase"/>
</dbReference>
<dbReference type="NCBIfam" id="TIGR01854">
    <property type="entry name" value="lipid_A_lpxH"/>
    <property type="match status" value="1"/>
</dbReference>
<dbReference type="NCBIfam" id="NF003743">
    <property type="entry name" value="PRK05340.1"/>
    <property type="match status" value="1"/>
</dbReference>
<dbReference type="PANTHER" id="PTHR34990:SF1">
    <property type="entry name" value="UDP-2,3-DIACYLGLUCOSAMINE HYDROLASE"/>
    <property type="match status" value="1"/>
</dbReference>
<dbReference type="PANTHER" id="PTHR34990">
    <property type="entry name" value="UDP-2,3-DIACYLGLUCOSAMINE HYDROLASE-RELATED"/>
    <property type="match status" value="1"/>
</dbReference>
<dbReference type="Pfam" id="PF00149">
    <property type="entry name" value="Metallophos"/>
    <property type="match status" value="1"/>
</dbReference>
<dbReference type="SUPFAM" id="SSF56300">
    <property type="entry name" value="Metallo-dependent phosphatases"/>
    <property type="match status" value="1"/>
</dbReference>
<keyword id="KW-0997">Cell inner membrane</keyword>
<keyword id="KW-1003">Cell membrane</keyword>
<keyword id="KW-0378">Hydrolase</keyword>
<keyword id="KW-0441">Lipid A biosynthesis</keyword>
<keyword id="KW-0444">Lipid biosynthesis</keyword>
<keyword id="KW-0443">Lipid metabolism</keyword>
<keyword id="KW-0464">Manganese</keyword>
<keyword id="KW-0472">Membrane</keyword>
<keyword id="KW-0479">Metal-binding</keyword>
<keyword id="KW-1185">Reference proteome</keyword>
<proteinExistence type="inferred from homology"/>
<protein>
    <recommendedName>
        <fullName evidence="1">UDP-2,3-diacylglucosamine hydrolase</fullName>
        <ecNumber evidence="1">3.6.1.54</ecNumber>
    </recommendedName>
    <alternativeName>
        <fullName evidence="1">UDP-2,3-diacylglucosamine diphosphatase</fullName>
    </alternativeName>
</protein>
<name>LPXH_SHELP</name>
<reference key="1">
    <citation type="submission" date="2007-03" db="EMBL/GenBank/DDBJ databases">
        <title>Complete sequence of Shewanella loihica PV-4.</title>
        <authorList>
            <consortium name="US DOE Joint Genome Institute"/>
            <person name="Copeland A."/>
            <person name="Lucas S."/>
            <person name="Lapidus A."/>
            <person name="Barry K."/>
            <person name="Detter J.C."/>
            <person name="Glavina del Rio T."/>
            <person name="Hammon N."/>
            <person name="Israni S."/>
            <person name="Dalin E."/>
            <person name="Tice H."/>
            <person name="Pitluck S."/>
            <person name="Chain P."/>
            <person name="Malfatti S."/>
            <person name="Shin M."/>
            <person name="Vergez L."/>
            <person name="Schmutz J."/>
            <person name="Larimer F."/>
            <person name="Land M."/>
            <person name="Hauser L."/>
            <person name="Kyrpides N."/>
            <person name="Mikhailova N."/>
            <person name="Romine M.F."/>
            <person name="Serres G."/>
            <person name="Fredrickson J."/>
            <person name="Tiedje J."/>
            <person name="Richardson P."/>
        </authorList>
    </citation>
    <scope>NUCLEOTIDE SEQUENCE [LARGE SCALE GENOMIC DNA]</scope>
    <source>
        <strain>ATCC BAA-1088 / PV-4</strain>
    </source>
</reference>